<keyword id="KW-0002">3D-structure</keyword>
<keyword id="KW-0285">Flavoprotein</keyword>
<keyword id="KW-0288">FMN</keyword>
<keyword id="KW-0520">NAD</keyword>
<keyword id="KW-0521">NADP</keyword>
<keyword id="KW-0560">Oxidoreductase</keyword>
<keyword id="KW-1185">Reference proteome</keyword>
<dbReference type="EC" id="1.-.-.-"/>
<dbReference type="EMBL" id="CP000253">
    <property type="protein sequence ID" value="ABD31831.1"/>
    <property type="molecule type" value="Genomic_DNA"/>
</dbReference>
<dbReference type="RefSeq" id="WP_000069101.1">
    <property type="nucleotide sequence ID" value="NZ_LS483365.1"/>
</dbReference>
<dbReference type="RefSeq" id="YP_501288.1">
    <property type="nucleotide sequence ID" value="NC_007795.1"/>
</dbReference>
<dbReference type="PDB" id="7JH4">
    <property type="method" value="X-ray"/>
    <property type="resolution" value="2.00 A"/>
    <property type="chains" value="A/B/C/D/E=1-223"/>
</dbReference>
<dbReference type="PDBsum" id="7JH4"/>
<dbReference type="SMR" id="Q2FVA4"/>
<dbReference type="STRING" id="93061.SAOUHSC_02829"/>
<dbReference type="PaxDb" id="1280-SAXN108_2772"/>
<dbReference type="GeneID" id="3921268"/>
<dbReference type="KEGG" id="sao:SAOUHSC_02829"/>
<dbReference type="PATRIC" id="fig|93061.5.peg.2559"/>
<dbReference type="eggNOG" id="COG0778">
    <property type="taxonomic scope" value="Bacteria"/>
</dbReference>
<dbReference type="HOGENOM" id="CLU_070764_4_1_9"/>
<dbReference type="OrthoDB" id="9809288at2"/>
<dbReference type="PRO" id="PR:Q2FVA4"/>
<dbReference type="Proteomes" id="UP000008816">
    <property type="component" value="Chromosome"/>
</dbReference>
<dbReference type="GO" id="GO:0005829">
    <property type="term" value="C:cytosol"/>
    <property type="evidence" value="ECO:0000318"/>
    <property type="project" value="GO_Central"/>
</dbReference>
<dbReference type="GO" id="GO:0016491">
    <property type="term" value="F:oxidoreductase activity"/>
    <property type="evidence" value="ECO:0000318"/>
    <property type="project" value="GO_Central"/>
</dbReference>
<dbReference type="GO" id="GO:0046256">
    <property type="term" value="P:2,4,6-trinitrotoluene catabolic process"/>
    <property type="evidence" value="ECO:0000318"/>
    <property type="project" value="GO_Central"/>
</dbReference>
<dbReference type="CDD" id="cd02149">
    <property type="entry name" value="NfsB-like"/>
    <property type="match status" value="1"/>
</dbReference>
<dbReference type="FunFam" id="3.40.109.10:FF:000008">
    <property type="entry name" value="Putative NAD(P)H nitroreductase"/>
    <property type="match status" value="1"/>
</dbReference>
<dbReference type="Gene3D" id="3.40.109.10">
    <property type="entry name" value="NADH Oxidase"/>
    <property type="match status" value="1"/>
</dbReference>
<dbReference type="InterPro" id="IPR033878">
    <property type="entry name" value="NfsB-like"/>
</dbReference>
<dbReference type="InterPro" id="IPR029479">
    <property type="entry name" value="Nitroreductase"/>
</dbReference>
<dbReference type="InterPro" id="IPR000415">
    <property type="entry name" value="Nitroreductase-like"/>
</dbReference>
<dbReference type="InterPro" id="IPR050627">
    <property type="entry name" value="Nitroreductase/BluB"/>
</dbReference>
<dbReference type="PANTHER" id="PTHR23026">
    <property type="entry name" value="NADPH NITROREDUCTASE"/>
    <property type="match status" value="1"/>
</dbReference>
<dbReference type="PANTHER" id="PTHR23026:SF125">
    <property type="entry name" value="OXYGEN-INSENSITIVE NAD(P)H NITROREDUCTASE"/>
    <property type="match status" value="1"/>
</dbReference>
<dbReference type="Pfam" id="PF00881">
    <property type="entry name" value="Nitroreductase"/>
    <property type="match status" value="1"/>
</dbReference>
<dbReference type="SUPFAM" id="SSF55469">
    <property type="entry name" value="FMN-dependent nitroreductase-like"/>
    <property type="match status" value="1"/>
</dbReference>
<proteinExistence type="evidence at protein level"/>
<feature type="chain" id="PRO_0000277537" description="Putative NAD(P)H nitroreductase SAOUHSC_02829">
    <location>
        <begin position="1"/>
        <end position="223"/>
    </location>
</feature>
<feature type="helix" evidence="2">
    <location>
        <begin position="4"/>
        <end position="14"/>
    </location>
</feature>
<feature type="helix" evidence="2">
    <location>
        <begin position="29"/>
        <end position="40"/>
    </location>
</feature>
<feature type="helix" evidence="2">
    <location>
        <begin position="45"/>
        <end position="47"/>
    </location>
</feature>
<feature type="strand" evidence="2">
    <location>
        <begin position="51"/>
        <end position="56"/>
    </location>
</feature>
<feature type="helix" evidence="2">
    <location>
        <begin position="59"/>
        <end position="67"/>
    </location>
</feature>
<feature type="helix" evidence="2">
    <location>
        <begin position="70"/>
        <end position="72"/>
    </location>
</feature>
<feature type="helix" evidence="2">
    <location>
        <begin position="73"/>
        <end position="78"/>
    </location>
</feature>
<feature type="strand" evidence="2">
    <location>
        <begin position="80"/>
        <end position="89"/>
    </location>
</feature>
<feature type="helix" evidence="2">
    <location>
        <begin position="96"/>
        <end position="104"/>
    </location>
</feature>
<feature type="helix" evidence="2">
    <location>
        <begin position="110"/>
        <end position="112"/>
    </location>
</feature>
<feature type="helix" evidence="2">
    <location>
        <begin position="113"/>
        <end position="126"/>
    </location>
</feature>
<feature type="helix" evidence="2">
    <location>
        <begin position="129"/>
        <end position="131"/>
    </location>
</feature>
<feature type="helix" evidence="2">
    <location>
        <begin position="133"/>
        <end position="157"/>
    </location>
</feature>
<feature type="strand" evidence="2">
    <location>
        <begin position="161"/>
        <end position="165"/>
    </location>
</feature>
<feature type="helix" evidence="2">
    <location>
        <begin position="170"/>
        <end position="179"/>
    </location>
</feature>
<feature type="turn" evidence="2">
    <location>
        <begin position="185"/>
        <end position="187"/>
    </location>
</feature>
<feature type="strand" evidence="2">
    <location>
        <begin position="188"/>
        <end position="197"/>
    </location>
</feature>
<feature type="strand" evidence="2">
    <location>
        <begin position="199"/>
        <end position="201"/>
    </location>
</feature>
<feature type="helix" evidence="2">
    <location>
        <begin position="212"/>
        <end position="215"/>
    </location>
</feature>
<feature type="strand" evidence="2">
    <location>
        <begin position="216"/>
        <end position="220"/>
    </location>
</feature>
<accession>Q2FVA4</accession>
<name>Y2829_STAA8</name>
<organism>
    <name type="scientific">Staphylococcus aureus (strain NCTC 8325 / PS 47)</name>
    <dbReference type="NCBI Taxonomy" id="93061"/>
    <lineage>
        <taxon>Bacteria</taxon>
        <taxon>Bacillati</taxon>
        <taxon>Bacillota</taxon>
        <taxon>Bacilli</taxon>
        <taxon>Bacillales</taxon>
        <taxon>Staphylococcaceae</taxon>
        <taxon>Staphylococcus</taxon>
    </lineage>
</organism>
<comment type="cofactor">
    <cofactor evidence="1">
        <name>FMN</name>
        <dbReference type="ChEBI" id="CHEBI:58210"/>
    </cofactor>
</comment>
<comment type="similarity">
    <text evidence="1">Belongs to the nitroreductase family.</text>
</comment>
<gene>
    <name type="ordered locus">SAOUHSC_02829</name>
</gene>
<reference key="1">
    <citation type="book" date="2006" name="Gram positive pathogens, 2nd edition">
        <title>The Staphylococcus aureus NCTC 8325 genome.</title>
        <editorList>
            <person name="Fischetti V."/>
            <person name="Novick R."/>
            <person name="Ferretti J."/>
            <person name="Portnoy D."/>
            <person name="Rood J."/>
        </editorList>
        <authorList>
            <person name="Gillaspy A.F."/>
            <person name="Worrell V."/>
            <person name="Orvis J."/>
            <person name="Roe B.A."/>
            <person name="Dyer D.W."/>
            <person name="Iandolo J.J."/>
        </authorList>
    </citation>
    <scope>NUCLEOTIDE SEQUENCE [LARGE SCALE GENOMIC DNA]</scope>
    <source>
        <strain>NCTC 8325 / PS 47</strain>
    </source>
</reference>
<sequence>MSNMNQTIMDAFHFRHATKQFDPQKKVSKEDFETILESGRLSPSSLGLEPWKFVVIQDQALRDELKAHSWGAAKQLDTASHFVLIFARKNVTSRSPYVQHMLRDIKKYEAQTIPAVEQKFDAFQADFHISDNDQALYDWSSKQTYIALGNMMTTAALLGIDSCPMEGFSLDTVTDILANKGILDTEQFGLSVMVAFGYRQQEPPKNKTRQAYEDVIEWVGPKE</sequence>
<protein>
    <recommendedName>
        <fullName>Putative NAD(P)H nitroreductase SAOUHSC_02829</fullName>
        <ecNumber>1.-.-.-</ecNumber>
    </recommendedName>
</protein>
<evidence type="ECO:0000305" key="1"/>
<evidence type="ECO:0007829" key="2">
    <source>
        <dbReference type="PDB" id="7JH4"/>
    </source>
</evidence>